<sequence>MADIDNKEQSELDQDLDDVEEVEEEETGEETKIKARQLTVQMMQNPQILAALQERLDGLVETPTGYIESLPRVVKRRVNALKNLQVKCAQIEAKFYEEVHDLERKYAVLYQPLFDKRFEIINAIYEPTEEECEWKPDEEDEISEELKEKAKVEDEKKDEEKEDPKGIPEFWLTVFKNVDLLSDMVQEHDEPILKHLKDIKVKFSDAGQPMSFVLEFHFEPNEYFTNEVLTKTYRMRSEPDDSDPFSFDGPEIMGCTGCQIDWKKGKNVTLKTIKKKQKHKGRGTVRTVTKTVSNDSFFNFFAPPEVPESGDLDDDSEAILAADFEIGHFLRERIIPRSVLYFTGEAIEDDDDDYDEEGEEADEEGEEEGDEENDPDYDPKKDQNPAECKQQ</sequence>
<feature type="initiator methionine" description="Removed" evidence="2">
    <location>
        <position position="1"/>
    </location>
</feature>
<feature type="chain" id="PRO_0000317139" description="Nucleosome assembly protein 1-like 1">
    <location>
        <begin position="2"/>
        <end position="388"/>
    </location>
</feature>
<feature type="propeptide" id="PRO_0000396685" description="Removed in mature form" evidence="2">
    <location>
        <begin position="389"/>
        <end position="391"/>
    </location>
</feature>
<feature type="region of interest" description="Disordered" evidence="4">
    <location>
        <begin position="1"/>
        <end position="32"/>
    </location>
</feature>
<feature type="region of interest" description="Disordered" evidence="4">
    <location>
        <begin position="132"/>
        <end position="163"/>
    </location>
</feature>
<feature type="region of interest" description="Disordered" evidence="4">
    <location>
        <begin position="345"/>
        <end position="391"/>
    </location>
</feature>
<feature type="short sequence motif" description="NAP1L motif" evidence="2">
    <location>
        <begin position="125"/>
        <end position="150"/>
    </location>
</feature>
<feature type="short sequence motif" description="Nuclear localization signal" evidence="3">
    <location>
        <begin position="273"/>
        <end position="279"/>
    </location>
</feature>
<feature type="compositionally biased region" description="Basic and acidic residues" evidence="4">
    <location>
        <begin position="1"/>
        <end position="10"/>
    </location>
</feature>
<feature type="compositionally biased region" description="Acidic residues" evidence="4">
    <location>
        <begin position="11"/>
        <end position="28"/>
    </location>
</feature>
<feature type="compositionally biased region" description="Acidic residues" evidence="4">
    <location>
        <begin position="132"/>
        <end position="143"/>
    </location>
</feature>
<feature type="compositionally biased region" description="Basic and acidic residues" evidence="4">
    <location>
        <begin position="144"/>
        <end position="163"/>
    </location>
</feature>
<feature type="compositionally biased region" description="Acidic residues" evidence="4">
    <location>
        <begin position="346"/>
        <end position="376"/>
    </location>
</feature>
<feature type="compositionally biased region" description="Basic and acidic residues" evidence="4">
    <location>
        <begin position="377"/>
        <end position="391"/>
    </location>
</feature>
<feature type="modified residue" description="N-acetylalanine" evidence="2">
    <location>
        <position position="2"/>
    </location>
</feature>
<feature type="modified residue" description="Phosphoserine" evidence="2">
    <location>
        <position position="10"/>
    </location>
</feature>
<feature type="modified residue" description="Phosphothreonine" evidence="2">
    <location>
        <position position="62"/>
    </location>
</feature>
<feature type="modified residue" description="Phosphothreonine" evidence="1">
    <location>
        <position position="64"/>
    </location>
</feature>
<feature type="modified residue" description="Phosphoserine" evidence="2">
    <location>
        <position position="69"/>
    </location>
</feature>
<feature type="modified residue" description="N6-acetyllysine" evidence="2">
    <location>
        <position position="116"/>
    </location>
</feature>
<feature type="modified residue" description="Phosphoserine" evidence="2">
    <location>
        <position position="143"/>
    </location>
</feature>
<feature type="modified residue" description="5-glutamyl polyglycine" evidence="1">
    <location>
        <position position="359"/>
    </location>
</feature>
<feature type="modified residue" description="5-glutamyl polyglycine" evidence="1">
    <location>
        <position position="360"/>
    </location>
</feature>
<feature type="modified residue" description="Cysteine methyl ester" evidence="5">
    <location>
        <position position="388"/>
    </location>
</feature>
<feature type="lipid moiety-binding region" description="S-farnesyl cysteine" evidence="2">
    <location>
        <position position="388"/>
    </location>
</feature>
<keyword id="KW-0007">Acetylation</keyword>
<keyword id="KW-0963">Cytoplasm</keyword>
<keyword id="KW-1017">Isopeptide bond</keyword>
<keyword id="KW-0449">Lipoprotein</keyword>
<keyword id="KW-0488">Methylation</keyword>
<keyword id="KW-0524">Neurogenesis</keyword>
<keyword id="KW-0539">Nucleus</keyword>
<keyword id="KW-0597">Phosphoprotein</keyword>
<keyword id="KW-0636">Prenylation</keyword>
<keyword id="KW-1185">Reference proteome</keyword>
<proteinExistence type="evidence at transcript level"/>
<reference key="1">
    <citation type="submission" date="2007-06" db="EMBL/GenBank/DDBJ databases">
        <authorList>
            <consortium name="NIH - Mammalian Gene Collection (MGC) project"/>
        </authorList>
    </citation>
    <scope>NUCLEOTIDE SEQUENCE [LARGE SCALE MRNA]</scope>
    <source>
        <strain>Hereford</strain>
        <tissue>Fetal pons</tissue>
    </source>
</reference>
<evidence type="ECO:0000250" key="1">
    <source>
        <dbReference type="UniProtKB" id="P28656"/>
    </source>
</evidence>
<evidence type="ECO:0000250" key="2">
    <source>
        <dbReference type="UniProtKB" id="P55209"/>
    </source>
</evidence>
<evidence type="ECO:0000255" key="3"/>
<evidence type="ECO:0000256" key="4">
    <source>
        <dbReference type="SAM" id="MobiDB-lite"/>
    </source>
</evidence>
<evidence type="ECO:0000305" key="5"/>
<gene>
    <name type="primary">NAP1L1</name>
</gene>
<protein>
    <recommendedName>
        <fullName>Nucleosome assembly protein 1-like 1</fullName>
    </recommendedName>
</protein>
<name>NP1L1_BOVIN</name>
<comment type="function">
    <text evidence="1 2">Histone chaperone that plays a role in the nuclear import of H2A-H2B and nucleosome assembly. Also participates in several important DNA repair mechanisms: greatly enhances ERCC6-mediated chromatin remodeling which is essential for transcription-coupled nucleotide excision DNA repair. Also stimulates homologous recombination (HR) by RAD51 and RAD54 which is essential in mitotic DNA double strand break (DSB) repair (By similarity). Plays a key role in the regulation of embryonic neurogenesis (By similarity). Promotes the proliferation of neural progenitors and inhibits neuronal differentiation during cortical development (By similarity). Regulates neurogenesis via the modulation of RASSF10; regulates RASSF10 expression by promoting SETD1A-mediated H3K4 methylation at the RASSF10 promoter (By similarity).</text>
</comment>
<comment type="subunit">
    <text evidence="1 2">Homodimer. The dimer binds strongly and sequentially to single and double H2A-H2B heterodimers. Interacts with ERCC6; this interaction increases ERCC6 processivity. Interacts with RAD54 (By similarity). Interacts with SETD1A (By similarity).</text>
</comment>
<comment type="subcellular location">
    <subcellularLocation>
        <location evidence="1">Nucleus</location>
    </subcellularLocation>
    <subcellularLocation>
        <location evidence="2">Melanosome</location>
    </subcellularLocation>
    <subcellularLocation>
        <location evidence="1">Cytoplasm</location>
    </subcellularLocation>
</comment>
<comment type="domain">
    <text evidence="2">The NAP1L motif is required for the histone chaperone activity.</text>
</comment>
<comment type="domain">
    <text evidence="2">The acidic domains are probably involved in the interaction with histones.</text>
</comment>
<comment type="PTM">
    <text evidence="1">Polyglycylated by TTLL10 on glutamate residues, resulting in polyglycine chains on the gamma-carboxyl group. Both polyglutamylation and polyglycylation modifications can coexist on the same protein on adjacent residues, and lowering polyglycylation levels increases polyglutamylation, and reciprocally.</text>
</comment>
<comment type="PTM">
    <text evidence="1">Polyglutamylated by TTLL4 on glutamate residues, resulting in polyglutamate chains on the gamma-carboxyl group. Both polyglutamylation and polyglycylation modifications can coexist on the same protein on adjacent residues, and lowering polyglycylation levels increases polyglutamylation, and reciprocally.</text>
</comment>
<comment type="similarity">
    <text evidence="5">Belongs to the nucleosome assembly protein (NAP) family.</text>
</comment>
<accession>A6H767</accession>
<dbReference type="EMBL" id="BC146131">
    <property type="protein sequence ID" value="AAI46132.1"/>
    <property type="molecule type" value="mRNA"/>
</dbReference>
<dbReference type="RefSeq" id="NP_001092685.1">
    <property type="nucleotide sequence ID" value="NM_001099215.2"/>
</dbReference>
<dbReference type="RefSeq" id="XP_015326352.1">
    <property type="nucleotide sequence ID" value="XM_015470866.1"/>
</dbReference>
<dbReference type="RefSeq" id="XP_059742784.1">
    <property type="nucleotide sequence ID" value="XM_059886801.1"/>
</dbReference>
<dbReference type="RefSeq" id="XP_059742785.1">
    <property type="nucleotide sequence ID" value="XM_059886802.1"/>
</dbReference>
<dbReference type="RefSeq" id="XP_059742786.1">
    <property type="nucleotide sequence ID" value="XM_059886803.1"/>
</dbReference>
<dbReference type="RefSeq" id="XP_059742787.1">
    <property type="nucleotide sequence ID" value="XM_059886804.1"/>
</dbReference>
<dbReference type="RefSeq" id="XP_059742788.1">
    <property type="nucleotide sequence ID" value="XM_059886805.1"/>
</dbReference>
<dbReference type="SMR" id="A6H767"/>
<dbReference type="FunCoup" id="A6H767">
    <property type="interactions" value="3276"/>
</dbReference>
<dbReference type="STRING" id="9913.ENSBTAP00000059172"/>
<dbReference type="PaxDb" id="9913-ENSBTAP00000027852"/>
<dbReference type="PeptideAtlas" id="A6H767"/>
<dbReference type="Ensembl" id="ENSBTAT00000130283.1">
    <property type="protein sequence ID" value="ENSBTAP00000092653.1"/>
    <property type="gene ID" value="ENSBTAG00000061413.1"/>
</dbReference>
<dbReference type="GeneID" id="790872"/>
<dbReference type="KEGG" id="bta:790872"/>
<dbReference type="CTD" id="4673"/>
<dbReference type="eggNOG" id="KOG1507">
    <property type="taxonomic scope" value="Eukaryota"/>
</dbReference>
<dbReference type="GeneTree" id="ENSGT00940000153362"/>
<dbReference type="HOGENOM" id="CLU_038841_3_0_1"/>
<dbReference type="InParanoid" id="A6H767"/>
<dbReference type="OrthoDB" id="27325at2759"/>
<dbReference type="TreeFam" id="TF314349"/>
<dbReference type="Proteomes" id="UP000009136">
    <property type="component" value="Chromosome 5"/>
</dbReference>
<dbReference type="GO" id="GO:0000785">
    <property type="term" value="C:chromatin"/>
    <property type="evidence" value="ECO:0000318"/>
    <property type="project" value="GO_Central"/>
</dbReference>
<dbReference type="GO" id="GO:0005737">
    <property type="term" value="C:cytoplasm"/>
    <property type="evidence" value="ECO:0000250"/>
    <property type="project" value="UniProtKB"/>
</dbReference>
<dbReference type="GO" id="GO:0042470">
    <property type="term" value="C:melanosome"/>
    <property type="evidence" value="ECO:0007669"/>
    <property type="project" value="UniProtKB-SubCell"/>
</dbReference>
<dbReference type="GO" id="GO:0005634">
    <property type="term" value="C:nucleus"/>
    <property type="evidence" value="ECO:0000250"/>
    <property type="project" value="UniProtKB"/>
</dbReference>
<dbReference type="GO" id="GO:0003682">
    <property type="term" value="F:chromatin binding"/>
    <property type="evidence" value="ECO:0000318"/>
    <property type="project" value="GO_Central"/>
</dbReference>
<dbReference type="GO" id="GO:0042393">
    <property type="term" value="F:histone binding"/>
    <property type="evidence" value="ECO:0000318"/>
    <property type="project" value="GO_Central"/>
</dbReference>
<dbReference type="GO" id="GO:0007399">
    <property type="term" value="P:nervous system development"/>
    <property type="evidence" value="ECO:0007669"/>
    <property type="project" value="UniProtKB-KW"/>
</dbReference>
<dbReference type="GO" id="GO:0006334">
    <property type="term" value="P:nucleosome assembly"/>
    <property type="evidence" value="ECO:0000318"/>
    <property type="project" value="GO_Central"/>
</dbReference>
<dbReference type="GO" id="GO:2000179">
    <property type="term" value="P:positive regulation of neural precursor cell proliferation"/>
    <property type="evidence" value="ECO:0000250"/>
    <property type="project" value="UniProtKB"/>
</dbReference>
<dbReference type="GO" id="GO:0050769">
    <property type="term" value="P:positive regulation of neurogenesis"/>
    <property type="evidence" value="ECO:0000250"/>
    <property type="project" value="UniProtKB"/>
</dbReference>
<dbReference type="FunFam" id="1.20.5.1500:FF:000001">
    <property type="entry name" value="Nucleosome assembly protein 1-like 1"/>
    <property type="match status" value="1"/>
</dbReference>
<dbReference type="FunFam" id="3.30.1120.90:FF:000001">
    <property type="entry name" value="Nucleosome assembly protein 1-like 1"/>
    <property type="match status" value="1"/>
</dbReference>
<dbReference type="Gene3D" id="1.20.5.1500">
    <property type="match status" value="1"/>
</dbReference>
<dbReference type="Gene3D" id="3.30.1120.90">
    <property type="entry name" value="Nucleosome assembly protein"/>
    <property type="match status" value="1"/>
</dbReference>
<dbReference type="InterPro" id="IPR037231">
    <property type="entry name" value="NAP-like_sf"/>
</dbReference>
<dbReference type="InterPro" id="IPR002164">
    <property type="entry name" value="NAP_family"/>
</dbReference>
<dbReference type="PANTHER" id="PTHR11875">
    <property type="entry name" value="TESTIS-SPECIFIC Y-ENCODED PROTEIN"/>
    <property type="match status" value="1"/>
</dbReference>
<dbReference type="Pfam" id="PF00956">
    <property type="entry name" value="NAP"/>
    <property type="match status" value="1"/>
</dbReference>
<dbReference type="SUPFAM" id="SSF143113">
    <property type="entry name" value="NAP-like"/>
    <property type="match status" value="1"/>
</dbReference>
<organism>
    <name type="scientific">Bos taurus</name>
    <name type="common">Bovine</name>
    <dbReference type="NCBI Taxonomy" id="9913"/>
    <lineage>
        <taxon>Eukaryota</taxon>
        <taxon>Metazoa</taxon>
        <taxon>Chordata</taxon>
        <taxon>Craniata</taxon>
        <taxon>Vertebrata</taxon>
        <taxon>Euteleostomi</taxon>
        <taxon>Mammalia</taxon>
        <taxon>Eutheria</taxon>
        <taxon>Laurasiatheria</taxon>
        <taxon>Artiodactyla</taxon>
        <taxon>Ruminantia</taxon>
        <taxon>Pecora</taxon>
        <taxon>Bovidae</taxon>
        <taxon>Bovinae</taxon>
        <taxon>Bos</taxon>
    </lineage>
</organism>